<reference key="1">
    <citation type="journal article" date="1999" name="Oncogene">
        <title>Evidence for interaction between human PRUNE and nm23-H1 NDPKinase.</title>
        <authorList>
            <person name="Reymond A."/>
            <person name="Volorio S."/>
            <person name="Merla G."/>
            <person name="Al-Maghtheh M."/>
            <person name="Zuffardi O."/>
            <person name="Bulfone A."/>
            <person name="Ballabio A."/>
            <person name="Zollo M."/>
        </authorList>
    </citation>
    <scope>NUCLEOTIDE SEQUENCE [MRNA]</scope>
    <scope>DEVELOPMENTAL STAGE</scope>
    <source>
        <strain>BALB/cJ</strain>
        <tissue>Brain</tissue>
    </source>
</reference>
<reference key="2">
    <citation type="journal article" date="2005" name="Science">
        <title>The transcriptional landscape of the mammalian genome.</title>
        <authorList>
            <person name="Carninci P."/>
            <person name="Kasukawa T."/>
            <person name="Katayama S."/>
            <person name="Gough J."/>
            <person name="Frith M.C."/>
            <person name="Maeda N."/>
            <person name="Oyama R."/>
            <person name="Ravasi T."/>
            <person name="Lenhard B."/>
            <person name="Wells C."/>
            <person name="Kodzius R."/>
            <person name="Shimokawa K."/>
            <person name="Bajic V.B."/>
            <person name="Brenner S.E."/>
            <person name="Batalov S."/>
            <person name="Forrest A.R."/>
            <person name="Zavolan M."/>
            <person name="Davis M.J."/>
            <person name="Wilming L.G."/>
            <person name="Aidinis V."/>
            <person name="Allen J.E."/>
            <person name="Ambesi-Impiombato A."/>
            <person name="Apweiler R."/>
            <person name="Aturaliya R.N."/>
            <person name="Bailey T.L."/>
            <person name="Bansal M."/>
            <person name="Baxter L."/>
            <person name="Beisel K.W."/>
            <person name="Bersano T."/>
            <person name="Bono H."/>
            <person name="Chalk A.M."/>
            <person name="Chiu K.P."/>
            <person name="Choudhary V."/>
            <person name="Christoffels A."/>
            <person name="Clutterbuck D.R."/>
            <person name="Crowe M.L."/>
            <person name="Dalla E."/>
            <person name="Dalrymple B.P."/>
            <person name="de Bono B."/>
            <person name="Della Gatta G."/>
            <person name="di Bernardo D."/>
            <person name="Down T."/>
            <person name="Engstrom P."/>
            <person name="Fagiolini M."/>
            <person name="Faulkner G."/>
            <person name="Fletcher C.F."/>
            <person name="Fukushima T."/>
            <person name="Furuno M."/>
            <person name="Futaki S."/>
            <person name="Gariboldi M."/>
            <person name="Georgii-Hemming P."/>
            <person name="Gingeras T.R."/>
            <person name="Gojobori T."/>
            <person name="Green R.E."/>
            <person name="Gustincich S."/>
            <person name="Harbers M."/>
            <person name="Hayashi Y."/>
            <person name="Hensch T.K."/>
            <person name="Hirokawa N."/>
            <person name="Hill D."/>
            <person name="Huminiecki L."/>
            <person name="Iacono M."/>
            <person name="Ikeo K."/>
            <person name="Iwama A."/>
            <person name="Ishikawa T."/>
            <person name="Jakt M."/>
            <person name="Kanapin A."/>
            <person name="Katoh M."/>
            <person name="Kawasawa Y."/>
            <person name="Kelso J."/>
            <person name="Kitamura H."/>
            <person name="Kitano H."/>
            <person name="Kollias G."/>
            <person name="Krishnan S.P."/>
            <person name="Kruger A."/>
            <person name="Kummerfeld S.K."/>
            <person name="Kurochkin I.V."/>
            <person name="Lareau L.F."/>
            <person name="Lazarevic D."/>
            <person name="Lipovich L."/>
            <person name="Liu J."/>
            <person name="Liuni S."/>
            <person name="McWilliam S."/>
            <person name="Madan Babu M."/>
            <person name="Madera M."/>
            <person name="Marchionni L."/>
            <person name="Matsuda H."/>
            <person name="Matsuzawa S."/>
            <person name="Miki H."/>
            <person name="Mignone F."/>
            <person name="Miyake S."/>
            <person name="Morris K."/>
            <person name="Mottagui-Tabar S."/>
            <person name="Mulder N."/>
            <person name="Nakano N."/>
            <person name="Nakauchi H."/>
            <person name="Ng P."/>
            <person name="Nilsson R."/>
            <person name="Nishiguchi S."/>
            <person name="Nishikawa S."/>
            <person name="Nori F."/>
            <person name="Ohara O."/>
            <person name="Okazaki Y."/>
            <person name="Orlando V."/>
            <person name="Pang K.C."/>
            <person name="Pavan W.J."/>
            <person name="Pavesi G."/>
            <person name="Pesole G."/>
            <person name="Petrovsky N."/>
            <person name="Piazza S."/>
            <person name="Reed J."/>
            <person name="Reid J.F."/>
            <person name="Ring B.Z."/>
            <person name="Ringwald M."/>
            <person name="Rost B."/>
            <person name="Ruan Y."/>
            <person name="Salzberg S.L."/>
            <person name="Sandelin A."/>
            <person name="Schneider C."/>
            <person name="Schoenbach C."/>
            <person name="Sekiguchi K."/>
            <person name="Semple C.A."/>
            <person name="Seno S."/>
            <person name="Sessa L."/>
            <person name="Sheng Y."/>
            <person name="Shibata Y."/>
            <person name="Shimada H."/>
            <person name="Shimada K."/>
            <person name="Silva D."/>
            <person name="Sinclair B."/>
            <person name="Sperling S."/>
            <person name="Stupka E."/>
            <person name="Sugiura K."/>
            <person name="Sultana R."/>
            <person name="Takenaka Y."/>
            <person name="Taki K."/>
            <person name="Tammoja K."/>
            <person name="Tan S.L."/>
            <person name="Tang S."/>
            <person name="Taylor M.S."/>
            <person name="Tegner J."/>
            <person name="Teichmann S.A."/>
            <person name="Ueda H.R."/>
            <person name="van Nimwegen E."/>
            <person name="Verardo R."/>
            <person name="Wei C.L."/>
            <person name="Yagi K."/>
            <person name="Yamanishi H."/>
            <person name="Zabarovsky E."/>
            <person name="Zhu S."/>
            <person name="Zimmer A."/>
            <person name="Hide W."/>
            <person name="Bult C."/>
            <person name="Grimmond S.M."/>
            <person name="Teasdale R.D."/>
            <person name="Liu E.T."/>
            <person name="Brusic V."/>
            <person name="Quackenbush J."/>
            <person name="Wahlestedt C."/>
            <person name="Mattick J.S."/>
            <person name="Hume D.A."/>
            <person name="Kai C."/>
            <person name="Sasaki D."/>
            <person name="Tomaru Y."/>
            <person name="Fukuda S."/>
            <person name="Kanamori-Katayama M."/>
            <person name="Suzuki M."/>
            <person name="Aoki J."/>
            <person name="Arakawa T."/>
            <person name="Iida J."/>
            <person name="Imamura K."/>
            <person name="Itoh M."/>
            <person name="Kato T."/>
            <person name="Kawaji H."/>
            <person name="Kawagashira N."/>
            <person name="Kawashima T."/>
            <person name="Kojima M."/>
            <person name="Kondo S."/>
            <person name="Konno H."/>
            <person name="Nakano K."/>
            <person name="Ninomiya N."/>
            <person name="Nishio T."/>
            <person name="Okada M."/>
            <person name="Plessy C."/>
            <person name="Shibata K."/>
            <person name="Shiraki T."/>
            <person name="Suzuki S."/>
            <person name="Tagami M."/>
            <person name="Waki K."/>
            <person name="Watahiki A."/>
            <person name="Okamura-Oho Y."/>
            <person name="Suzuki H."/>
            <person name="Kawai J."/>
            <person name="Hayashizaki Y."/>
        </authorList>
    </citation>
    <scope>NUCLEOTIDE SEQUENCE [LARGE SCALE MRNA]</scope>
    <source>
        <strain>C57BL/6J</strain>
        <tissue>Head</tissue>
        <tissue>Heart</tissue>
    </source>
</reference>
<reference key="3">
    <citation type="journal article" date="2004" name="Genome Res.">
        <title>The status, quality, and expansion of the NIH full-length cDNA project: the Mammalian Gene Collection (MGC).</title>
        <authorList>
            <consortium name="The MGC Project Team"/>
        </authorList>
    </citation>
    <scope>NUCLEOTIDE SEQUENCE [LARGE SCALE MRNA]</scope>
    <source>
        <strain>C57BL/6J</strain>
        <tissue>Brain</tissue>
    </source>
</reference>
<reference key="4">
    <citation type="journal article" date="2010" name="Cell">
        <title>A tissue-specific atlas of mouse protein phosphorylation and expression.</title>
        <authorList>
            <person name="Huttlin E.L."/>
            <person name="Jedrychowski M.P."/>
            <person name="Elias J.E."/>
            <person name="Goswami T."/>
            <person name="Rad R."/>
            <person name="Beausoleil S.A."/>
            <person name="Villen J."/>
            <person name="Haas W."/>
            <person name="Sowa M.E."/>
            <person name="Gygi S.P."/>
        </authorList>
    </citation>
    <scope>PHOSPHORYLATION [LARGE SCALE ANALYSIS] AT SER-400; THR-411 AND SER-415</scope>
    <scope>IDENTIFICATION BY MASS SPECTROMETRY [LARGE SCALE ANALYSIS]</scope>
    <source>
        <tissue>Brain</tissue>
        <tissue>Brown adipose tissue</tissue>
        <tissue>Heart</tissue>
        <tissue>Kidney</tissue>
        <tissue>Spleen</tissue>
        <tissue>Testis</tissue>
    </source>
</reference>
<gene>
    <name type="primary">Prune1</name>
    <name type="synonym">Prune</name>
</gene>
<proteinExistence type="evidence at protein level"/>
<name>PRUN1_MOUSE</name>
<dbReference type="EC" id="3.6.1.1"/>
<dbReference type="EMBL" id="AF051908">
    <property type="protein sequence ID" value="AAC95291.2"/>
    <property type="molecule type" value="mRNA"/>
</dbReference>
<dbReference type="EMBL" id="AK081637">
    <property type="protein sequence ID" value="BAC38278.1"/>
    <property type="molecule type" value="mRNA"/>
</dbReference>
<dbReference type="EMBL" id="AK142160">
    <property type="protein sequence ID" value="BAE24953.1"/>
    <property type="molecule type" value="mRNA"/>
</dbReference>
<dbReference type="EMBL" id="BC057546">
    <property type="protein sequence ID" value="AAH57546.1"/>
    <property type="molecule type" value="mRNA"/>
</dbReference>
<dbReference type="EMBL" id="BC058635">
    <property type="protein sequence ID" value="AAH58635.1"/>
    <property type="molecule type" value="mRNA"/>
</dbReference>
<dbReference type="CCDS" id="CCDS17610.1"/>
<dbReference type="RefSeq" id="NP_775482.1">
    <property type="nucleotide sequence ID" value="NM_173347.2"/>
</dbReference>
<dbReference type="SMR" id="Q8BIW1"/>
<dbReference type="BioGRID" id="230866">
    <property type="interactions" value="14"/>
</dbReference>
<dbReference type="FunCoup" id="Q8BIW1">
    <property type="interactions" value="1239"/>
</dbReference>
<dbReference type="IntAct" id="Q8BIW1">
    <property type="interactions" value="2"/>
</dbReference>
<dbReference type="STRING" id="10090.ENSMUSP00000015855"/>
<dbReference type="GlyGen" id="Q8BIW1">
    <property type="glycosylation" value="2 sites, 1 O-linked glycan (1 site)"/>
</dbReference>
<dbReference type="iPTMnet" id="Q8BIW1"/>
<dbReference type="PhosphoSitePlus" id="Q8BIW1"/>
<dbReference type="SwissPalm" id="Q8BIW1"/>
<dbReference type="jPOST" id="Q8BIW1"/>
<dbReference type="PaxDb" id="10090-ENSMUSP00000015855"/>
<dbReference type="PeptideAtlas" id="Q8BIW1"/>
<dbReference type="ProteomicsDB" id="291536"/>
<dbReference type="Pumba" id="Q8BIW1"/>
<dbReference type="Antibodypedia" id="34044">
    <property type="antibodies" value="206 antibodies from 28 providers"/>
</dbReference>
<dbReference type="Ensembl" id="ENSMUST00000015855.8">
    <property type="protein sequence ID" value="ENSMUSP00000015855.8"/>
    <property type="gene ID" value="ENSMUSG00000015711.9"/>
</dbReference>
<dbReference type="GeneID" id="229589"/>
<dbReference type="KEGG" id="mmu:229589"/>
<dbReference type="UCSC" id="uc008qiz.1">
    <property type="organism name" value="mouse"/>
</dbReference>
<dbReference type="AGR" id="MGI:1925152"/>
<dbReference type="CTD" id="58497"/>
<dbReference type="MGI" id="MGI:1925152">
    <property type="gene designation" value="Prune1"/>
</dbReference>
<dbReference type="VEuPathDB" id="HostDB:ENSMUSG00000015711"/>
<dbReference type="eggNOG" id="KOG4129">
    <property type="taxonomic scope" value="Eukaryota"/>
</dbReference>
<dbReference type="GeneTree" id="ENSGT00450000040262"/>
<dbReference type="HOGENOM" id="CLU_019358_2_0_1"/>
<dbReference type="InParanoid" id="Q8BIW1"/>
<dbReference type="OMA" id="TMTIFFN"/>
<dbReference type="OrthoDB" id="374045at2759"/>
<dbReference type="PhylomeDB" id="Q8BIW1"/>
<dbReference type="TreeFam" id="TF323914"/>
<dbReference type="BioGRID-ORCS" id="229589">
    <property type="hits" value="15 hits in 78 CRISPR screens"/>
</dbReference>
<dbReference type="ChiTaRS" id="Prune1">
    <property type="organism name" value="mouse"/>
</dbReference>
<dbReference type="PRO" id="PR:Q8BIW1"/>
<dbReference type="Proteomes" id="UP000000589">
    <property type="component" value="Chromosome 3"/>
</dbReference>
<dbReference type="RNAct" id="Q8BIW1">
    <property type="molecule type" value="protein"/>
</dbReference>
<dbReference type="Bgee" id="ENSMUSG00000015711">
    <property type="expression patterns" value="Expressed in extensor digitorum longus and 278 other cell types or tissues"/>
</dbReference>
<dbReference type="GO" id="GO:0005829">
    <property type="term" value="C:cytosol"/>
    <property type="evidence" value="ECO:0007669"/>
    <property type="project" value="Ensembl"/>
</dbReference>
<dbReference type="GO" id="GO:0005925">
    <property type="term" value="C:focal adhesion"/>
    <property type="evidence" value="ECO:0007669"/>
    <property type="project" value="UniProtKB-SubCell"/>
</dbReference>
<dbReference type="GO" id="GO:0005634">
    <property type="term" value="C:nucleus"/>
    <property type="evidence" value="ECO:0007669"/>
    <property type="project" value="UniProtKB-SubCell"/>
</dbReference>
<dbReference type="GO" id="GO:0004427">
    <property type="term" value="F:inorganic diphosphate phosphatase activity"/>
    <property type="evidence" value="ECO:0007669"/>
    <property type="project" value="UniProtKB-EC"/>
</dbReference>
<dbReference type="GO" id="GO:0046872">
    <property type="term" value="F:metal ion binding"/>
    <property type="evidence" value="ECO:0007669"/>
    <property type="project" value="UniProtKB-KW"/>
</dbReference>
<dbReference type="GO" id="GO:0016791">
    <property type="term" value="F:phosphatase activity"/>
    <property type="evidence" value="ECO:0007669"/>
    <property type="project" value="Ensembl"/>
</dbReference>
<dbReference type="GO" id="GO:0015631">
    <property type="term" value="F:tubulin binding"/>
    <property type="evidence" value="ECO:0007669"/>
    <property type="project" value="Ensembl"/>
</dbReference>
<dbReference type="GO" id="GO:0031113">
    <property type="term" value="P:regulation of microtubule polymerization"/>
    <property type="evidence" value="ECO:0007669"/>
    <property type="project" value="Ensembl"/>
</dbReference>
<dbReference type="GO" id="GO:0050767">
    <property type="term" value="P:regulation of neurogenesis"/>
    <property type="evidence" value="ECO:0007669"/>
    <property type="project" value="Ensembl"/>
</dbReference>
<dbReference type="FunFam" id="3.10.310.20:FF:000003">
    <property type="entry name" value="Prune exopolyphosphatase 1"/>
    <property type="match status" value="1"/>
</dbReference>
<dbReference type="FunFam" id="3.90.1640.10:FF:000004">
    <property type="entry name" value="Prune exopolyphosphatase 1"/>
    <property type="match status" value="1"/>
</dbReference>
<dbReference type="Gene3D" id="3.10.310.20">
    <property type="entry name" value="DHHA2 domain"/>
    <property type="match status" value="1"/>
</dbReference>
<dbReference type="Gene3D" id="3.90.1640.10">
    <property type="entry name" value="inorganic pyrophosphatase (n-terminal core)"/>
    <property type="match status" value="1"/>
</dbReference>
<dbReference type="InterPro" id="IPR001667">
    <property type="entry name" value="DDH_dom"/>
</dbReference>
<dbReference type="InterPro" id="IPR038763">
    <property type="entry name" value="DHH_sf"/>
</dbReference>
<dbReference type="InterPro" id="IPR004097">
    <property type="entry name" value="DHHA2"/>
</dbReference>
<dbReference type="InterPro" id="IPR038222">
    <property type="entry name" value="DHHA2_dom_sf"/>
</dbReference>
<dbReference type="PANTHER" id="PTHR12112">
    <property type="entry name" value="BNIP - RELATED"/>
    <property type="match status" value="1"/>
</dbReference>
<dbReference type="PANTHER" id="PTHR12112:SF47">
    <property type="entry name" value="EXOPOLYPHOSPHATASE PRUNE1"/>
    <property type="match status" value="1"/>
</dbReference>
<dbReference type="Pfam" id="PF01368">
    <property type="entry name" value="DHH"/>
    <property type="match status" value="1"/>
</dbReference>
<dbReference type="Pfam" id="PF02833">
    <property type="entry name" value="DHHA2"/>
    <property type="match status" value="1"/>
</dbReference>
<dbReference type="SMART" id="SM01131">
    <property type="entry name" value="DHHA2"/>
    <property type="match status" value="1"/>
</dbReference>
<dbReference type="SUPFAM" id="SSF64182">
    <property type="entry name" value="DHH phosphoesterases"/>
    <property type="match status" value="1"/>
</dbReference>
<evidence type="ECO:0000250" key="1"/>
<evidence type="ECO:0000250" key="2">
    <source>
        <dbReference type="UniProtKB" id="Q86TP1"/>
    </source>
</evidence>
<evidence type="ECO:0000256" key="3">
    <source>
        <dbReference type="SAM" id="MobiDB-lite"/>
    </source>
</evidence>
<evidence type="ECO:0000269" key="4">
    <source>
    </source>
</evidence>
<evidence type="ECO:0000305" key="5"/>
<evidence type="ECO:0007744" key="6">
    <source>
    </source>
</evidence>
<organism>
    <name type="scientific">Mus musculus</name>
    <name type="common">Mouse</name>
    <dbReference type="NCBI Taxonomy" id="10090"/>
    <lineage>
        <taxon>Eukaryota</taxon>
        <taxon>Metazoa</taxon>
        <taxon>Chordata</taxon>
        <taxon>Craniata</taxon>
        <taxon>Vertebrata</taxon>
        <taxon>Euteleostomi</taxon>
        <taxon>Mammalia</taxon>
        <taxon>Eutheria</taxon>
        <taxon>Euarchontoglires</taxon>
        <taxon>Glires</taxon>
        <taxon>Rodentia</taxon>
        <taxon>Myomorpha</taxon>
        <taxon>Muroidea</taxon>
        <taxon>Muridae</taxon>
        <taxon>Murinae</taxon>
        <taxon>Mus</taxon>
        <taxon>Mus</taxon>
    </lineage>
</organism>
<comment type="function">
    <text evidence="2">Phosphodiesterase (PDE) that has higher activity toward cAMP than cGMP, as substrate. Plays a role in cell proliferation, migration and differentiation, and acts as a negative regulator of NME1. Plays a role in the regulation of neurogenesis. Involved in the regulation of microtubule polymerization.</text>
</comment>
<comment type="catalytic activity">
    <reaction>
        <text>diphosphate + H2O = 2 phosphate + H(+)</text>
        <dbReference type="Rhea" id="RHEA:24576"/>
        <dbReference type="ChEBI" id="CHEBI:15377"/>
        <dbReference type="ChEBI" id="CHEBI:15378"/>
        <dbReference type="ChEBI" id="CHEBI:33019"/>
        <dbReference type="ChEBI" id="CHEBI:43474"/>
        <dbReference type="EC" id="3.6.1.1"/>
    </reaction>
</comment>
<comment type="cofactor">
    <cofactor evidence="1">
        <name>Mn(2+)</name>
        <dbReference type="ChEBI" id="CHEBI:29035"/>
    </cofactor>
    <text evidence="1">Binds 2 manganese ions per subunit.</text>
</comment>
<comment type="activity regulation">
    <text evidence="1">Activated by magnesium ions and inhibited by manganese ions. Inhibited by dipyridamole, moderately sensitive to IBMX and inhibited by vinpocetine (By similarity).</text>
</comment>
<comment type="subunit">
    <text evidence="2">Homooligomer. Able to homodimerize via its C-terminal domain. Interacts with NME1. Interacts with GSK3; at focal adhesion complexes where paxillin and vinculin are colocalized. Interacts with alpha and beta tubulin.</text>
</comment>
<comment type="subcellular location">
    <subcellularLocation>
        <location evidence="1">Cytoplasm</location>
    </subcellularLocation>
    <subcellularLocation>
        <location evidence="1">Nucleus</location>
    </subcellularLocation>
    <subcellularLocation>
        <location evidence="1">Cell junction</location>
        <location evidence="1">Focal adhesion</location>
    </subcellularLocation>
</comment>
<comment type="developmental stage">
    <text evidence="4">In the developing embryo, a high level of expression is confined to the nervous system particularly in the dorsal root ganglia, cranial nerves, and neural retina. From 10.5 dpc, expressed at low levels in the basal plate along the entire neural tube, while at 12.5 dpc the expression in the nervous system is definitively stronger, especially in the cranial and dorsal root ganglia and in the spinal nerves. In the hypothalamus, the expression is confined to the retro-chiasmatic area (RCH) and is also detectable in the remnant of the Rathke's pouch. In the developing eye, exclusively expressed in the prospective neural retina, equally distributed in both the deep and superficial layers. At 16.5 dpc, expression is still detectable in the outer neuroblast layer of the neural retina.</text>
</comment>
<comment type="similarity">
    <text evidence="5">Belongs to the PPase class C family. Prune subfamily.</text>
</comment>
<protein>
    <recommendedName>
        <fullName>Exopolyphosphatase PRUNE1</fullName>
        <ecNumber>3.6.1.1</ecNumber>
    </recommendedName>
    <alternativeName>
        <fullName>PRUNEM1</fullName>
    </alternativeName>
</protein>
<keyword id="KW-0007">Acetylation</keyword>
<keyword id="KW-0965">Cell junction</keyword>
<keyword id="KW-0963">Cytoplasm</keyword>
<keyword id="KW-0378">Hydrolase</keyword>
<keyword id="KW-0464">Manganese</keyword>
<keyword id="KW-0479">Metal-binding</keyword>
<keyword id="KW-0539">Nucleus</keyword>
<keyword id="KW-0597">Phosphoprotein</keyword>
<keyword id="KW-1185">Reference proteome</keyword>
<sequence>MEDYLQDCRAALQDSRPLHVVLGNEACDLDSMVSALALAFYLTKTSEAEDIFIPVLNIKRSELPLRGDNVFFLQEVKIPEPALIFRDEIDLLALHQAGQLTLILVDHHILPKSDAALEEAVAEVLDHRPIEQKYCPPCHVSVELVGSCATLVTERILQGAPETLDRQTAALLHGTIILDCVNMDTNIGKATPKDSKYVEELEALFPDLPKRKDIFDSLQKAKFDVSGLTTEQMLRKDQKTVYRQGTKVAISAIYMDLKAFLQRTDLFTDLSSFCHDHSYDALVAMTIFFNTQNEPVRQLAIFCPHEALRMTICGILERSTSPPLKLTPIPSTSPNLQAYHQGNTQVSRKKLLPVLQEALSAYLDSAKMASGQSEVAVGMSREQVDKDLDKASNSLISGLSQDEEDPPLPPTPMNSLVDECPLDQGLPKFSAEAVFEKCSQISLSQSARACTSNK</sequence>
<accession>Q8BIW1</accession>
<accession>Q80VU0</accession>
<feature type="chain" id="PRO_0000337988" description="Exopolyphosphatase PRUNE1">
    <location>
        <begin position="1"/>
        <end position="454"/>
    </location>
</feature>
<feature type="region of interest" description="Essential for homodimerization" evidence="1">
    <location>
        <begin position="394"/>
        <end position="421"/>
    </location>
</feature>
<feature type="region of interest" description="Disordered" evidence="3">
    <location>
        <begin position="397"/>
        <end position="420"/>
    </location>
</feature>
<feature type="short sequence motif" description="DHH motif" evidence="1">
    <location>
        <begin position="106"/>
        <end position="108"/>
    </location>
</feature>
<feature type="binding site" evidence="1">
    <location>
        <position position="28"/>
    </location>
    <ligand>
        <name>Mn(2+)</name>
        <dbReference type="ChEBI" id="CHEBI:29035"/>
        <label>1</label>
    </ligand>
</feature>
<feature type="binding site" evidence="1">
    <location>
        <position position="30"/>
    </location>
    <ligand>
        <name>Mn(2+)</name>
        <dbReference type="ChEBI" id="CHEBI:29035"/>
        <label>2</label>
    </ligand>
</feature>
<feature type="binding site" evidence="1">
    <location>
        <position position="106"/>
    </location>
    <ligand>
        <name>Mn(2+)</name>
        <dbReference type="ChEBI" id="CHEBI:29035"/>
        <label>1</label>
    </ligand>
</feature>
<feature type="binding site" evidence="1">
    <location>
        <position position="106"/>
    </location>
    <ligand>
        <name>Mn(2+)</name>
        <dbReference type="ChEBI" id="CHEBI:29035"/>
        <label>2</label>
    </ligand>
</feature>
<feature type="binding site" evidence="1">
    <location>
        <position position="179"/>
    </location>
    <ligand>
        <name>Mn(2+)</name>
        <dbReference type="ChEBI" id="CHEBI:29035"/>
        <label>2</label>
    </ligand>
</feature>
<feature type="modified residue" description="N-acetylmethionine" evidence="2">
    <location>
        <position position="1"/>
    </location>
</feature>
<feature type="modified residue" description="Phosphoserine" evidence="6">
    <location>
        <position position="400"/>
    </location>
</feature>
<feature type="modified residue" description="Phosphothreonine" evidence="6">
    <location>
        <position position="411"/>
    </location>
</feature>
<feature type="modified residue" description="Phosphoserine" evidence="6">
    <location>
        <position position="415"/>
    </location>
</feature>
<feature type="sequence conflict" description="In Ref. 1; AAC95291." evidence="5" ref="1">
    <original>E</original>
    <variation>A</variation>
    <location>
        <position position="75"/>
    </location>
</feature>
<feature type="sequence conflict" description="In Ref. 1; AAC95291." evidence="5" ref="1">
    <original>SG</original>
    <variation>LW</variation>
    <location>
        <begin position="397"/>
        <end position="398"/>
    </location>
</feature>